<protein>
    <recommendedName>
        <fullName evidence="1">Flap endonuclease Xni</fullName>
        <shortName evidence="1">FEN</shortName>
        <ecNumber evidence="1">3.1.-.-</ecNumber>
    </recommendedName>
</protein>
<reference key="1">
    <citation type="submission" date="2006-09" db="EMBL/GenBank/DDBJ databases">
        <title>Complete sequence of chromosome 1 of Shewanella sp. ANA-3.</title>
        <authorList>
            <person name="Copeland A."/>
            <person name="Lucas S."/>
            <person name="Lapidus A."/>
            <person name="Barry K."/>
            <person name="Detter J.C."/>
            <person name="Glavina del Rio T."/>
            <person name="Hammon N."/>
            <person name="Israni S."/>
            <person name="Dalin E."/>
            <person name="Tice H."/>
            <person name="Pitluck S."/>
            <person name="Chertkov O."/>
            <person name="Brettin T."/>
            <person name="Bruce D."/>
            <person name="Han C."/>
            <person name="Tapia R."/>
            <person name="Gilna P."/>
            <person name="Schmutz J."/>
            <person name="Larimer F."/>
            <person name="Land M."/>
            <person name="Hauser L."/>
            <person name="Kyrpides N."/>
            <person name="Kim E."/>
            <person name="Newman D."/>
            <person name="Salticov C."/>
            <person name="Konstantinidis K."/>
            <person name="Klappenback J."/>
            <person name="Tiedje J."/>
            <person name="Richardson P."/>
        </authorList>
    </citation>
    <scope>NUCLEOTIDE SEQUENCE [LARGE SCALE GENOMIC DNA]</scope>
    <source>
        <strain>ANA-3</strain>
    </source>
</reference>
<accession>A0KZ94</accession>
<comment type="function">
    <text evidence="1">Has flap endonuclease activity. During DNA replication, flap endonucleases cleave the 5'-overhanging flap structure that is generated by displacement synthesis when DNA polymerase encounters the 5'-end of a downstream Okazaki fragment.</text>
</comment>
<comment type="cofactor">
    <cofactor evidence="1">
        <name>Mg(2+)</name>
        <dbReference type="ChEBI" id="CHEBI:18420"/>
    </cofactor>
    <text evidence="1">Binds 2 Mg(2+) per subunit. Only one magnesium ion has a direct interaction with the protein, the other interactions are indirect.</text>
</comment>
<comment type="cofactor">
    <cofactor evidence="1">
        <name>K(+)</name>
        <dbReference type="ChEBI" id="CHEBI:29103"/>
    </cofactor>
    <text evidence="1">Binds 1 K(+) per subunit. The potassium ion strongly increases the affinity for DNA.</text>
</comment>
<comment type="similarity">
    <text evidence="1">Belongs to the Xni family.</text>
</comment>
<proteinExistence type="inferred from homology"/>
<feature type="chain" id="PRO_0000297878" description="Flap endonuclease Xni">
    <location>
        <begin position="1"/>
        <end position="260"/>
    </location>
</feature>
<feature type="domain" description="5'-3' exonuclease" evidence="1">
    <location>
        <begin position="164"/>
        <end position="254"/>
    </location>
</feature>
<feature type="region of interest" description="Interaction with DNA" evidence="1">
    <location>
        <begin position="185"/>
        <end position="190"/>
    </location>
</feature>
<feature type="binding site" evidence="1">
    <location>
        <position position="105"/>
    </location>
    <ligand>
        <name>Mg(2+)</name>
        <dbReference type="ChEBI" id="CHEBI:18420"/>
    </ligand>
</feature>
<feature type="binding site" evidence="1">
    <location>
        <position position="172"/>
    </location>
    <ligand>
        <name>K(+)</name>
        <dbReference type="ChEBI" id="CHEBI:29103"/>
    </ligand>
</feature>
<feature type="binding site" evidence="1">
    <location>
        <position position="173"/>
    </location>
    <ligand>
        <name>K(+)</name>
        <dbReference type="ChEBI" id="CHEBI:29103"/>
    </ligand>
</feature>
<feature type="binding site" evidence="1">
    <location>
        <position position="181"/>
    </location>
    <ligand>
        <name>K(+)</name>
        <dbReference type="ChEBI" id="CHEBI:29103"/>
    </ligand>
</feature>
<feature type="binding site" evidence="1">
    <location>
        <position position="183"/>
    </location>
    <ligand>
        <name>K(+)</name>
        <dbReference type="ChEBI" id="CHEBI:29103"/>
    </ligand>
</feature>
<feature type="binding site" evidence="1">
    <location>
        <position position="186"/>
    </location>
    <ligand>
        <name>K(+)</name>
        <dbReference type="ChEBI" id="CHEBI:29103"/>
    </ligand>
</feature>
<organism>
    <name type="scientific">Shewanella sp. (strain ANA-3)</name>
    <dbReference type="NCBI Taxonomy" id="94122"/>
    <lineage>
        <taxon>Bacteria</taxon>
        <taxon>Pseudomonadati</taxon>
        <taxon>Pseudomonadota</taxon>
        <taxon>Gammaproteobacteria</taxon>
        <taxon>Alteromonadales</taxon>
        <taxon>Shewanellaceae</taxon>
        <taxon>Shewanella</taxon>
    </lineage>
</organism>
<gene>
    <name evidence="1" type="primary">xni</name>
    <name evidence="1" type="synonym">ygdG</name>
    <name type="ordered locus">Shewana3_2886</name>
</gene>
<dbReference type="EC" id="3.1.-.-" evidence="1"/>
<dbReference type="EMBL" id="CP000469">
    <property type="protein sequence ID" value="ABK49113.1"/>
    <property type="molecule type" value="Genomic_DNA"/>
</dbReference>
<dbReference type="RefSeq" id="WP_011717752.1">
    <property type="nucleotide sequence ID" value="NC_008577.1"/>
</dbReference>
<dbReference type="SMR" id="A0KZ94"/>
<dbReference type="STRING" id="94122.Shewana3_2886"/>
<dbReference type="KEGG" id="shn:Shewana3_2886"/>
<dbReference type="eggNOG" id="COG0258">
    <property type="taxonomic scope" value="Bacteria"/>
</dbReference>
<dbReference type="HOGENOM" id="CLU_004675_1_2_6"/>
<dbReference type="OrthoDB" id="8070997at2"/>
<dbReference type="Proteomes" id="UP000002589">
    <property type="component" value="Chromosome"/>
</dbReference>
<dbReference type="GO" id="GO:0008409">
    <property type="term" value="F:5'-3' exonuclease activity"/>
    <property type="evidence" value="ECO:0007669"/>
    <property type="project" value="InterPro"/>
</dbReference>
<dbReference type="GO" id="GO:0017108">
    <property type="term" value="F:5'-flap endonuclease activity"/>
    <property type="evidence" value="ECO:0007669"/>
    <property type="project" value="UniProtKB-UniRule"/>
</dbReference>
<dbReference type="GO" id="GO:0003677">
    <property type="term" value="F:DNA binding"/>
    <property type="evidence" value="ECO:0007669"/>
    <property type="project" value="UniProtKB-UniRule"/>
</dbReference>
<dbReference type="GO" id="GO:0000287">
    <property type="term" value="F:magnesium ion binding"/>
    <property type="evidence" value="ECO:0007669"/>
    <property type="project" value="UniProtKB-UniRule"/>
</dbReference>
<dbReference type="GO" id="GO:0030955">
    <property type="term" value="F:potassium ion binding"/>
    <property type="evidence" value="ECO:0007669"/>
    <property type="project" value="UniProtKB-UniRule"/>
</dbReference>
<dbReference type="GO" id="GO:0033567">
    <property type="term" value="P:DNA replication, Okazaki fragment processing"/>
    <property type="evidence" value="ECO:0007669"/>
    <property type="project" value="UniProtKB-UniRule"/>
</dbReference>
<dbReference type="CDD" id="cd09898">
    <property type="entry name" value="H3TH_53EXO"/>
    <property type="match status" value="1"/>
</dbReference>
<dbReference type="CDD" id="cd09859">
    <property type="entry name" value="PIN_53EXO"/>
    <property type="match status" value="1"/>
</dbReference>
<dbReference type="FunFam" id="1.10.150.20:FF:000003">
    <property type="entry name" value="DNA polymerase I"/>
    <property type="match status" value="1"/>
</dbReference>
<dbReference type="FunFam" id="3.40.50.1010:FF:000132">
    <property type="entry name" value="Flap endonuclease Xni"/>
    <property type="match status" value="1"/>
</dbReference>
<dbReference type="Gene3D" id="1.10.150.20">
    <property type="entry name" value="5' to 3' exonuclease, C-terminal subdomain"/>
    <property type="match status" value="1"/>
</dbReference>
<dbReference type="Gene3D" id="3.40.50.1010">
    <property type="entry name" value="5'-nuclease"/>
    <property type="match status" value="1"/>
</dbReference>
<dbReference type="HAMAP" id="MF_01192">
    <property type="entry name" value="Xni"/>
    <property type="match status" value="1"/>
</dbReference>
<dbReference type="InterPro" id="IPR020046">
    <property type="entry name" value="5-3_exonucl_a-hlix_arch_N"/>
</dbReference>
<dbReference type="InterPro" id="IPR002421">
    <property type="entry name" value="5-3_exonuclease"/>
</dbReference>
<dbReference type="InterPro" id="IPR036279">
    <property type="entry name" value="5-3_exonuclease_C_sf"/>
</dbReference>
<dbReference type="InterPro" id="IPR020045">
    <property type="entry name" value="DNA_polI_H3TH"/>
</dbReference>
<dbReference type="InterPro" id="IPR038969">
    <property type="entry name" value="FEN"/>
</dbReference>
<dbReference type="InterPro" id="IPR008918">
    <property type="entry name" value="HhH2"/>
</dbReference>
<dbReference type="InterPro" id="IPR029060">
    <property type="entry name" value="PIN-like_dom_sf"/>
</dbReference>
<dbReference type="InterPro" id="IPR022895">
    <property type="entry name" value="Xni"/>
</dbReference>
<dbReference type="NCBIfam" id="NF007017">
    <property type="entry name" value="PRK09482.1"/>
    <property type="match status" value="1"/>
</dbReference>
<dbReference type="PANTHER" id="PTHR42646:SF2">
    <property type="entry name" value="5'-3' EXONUCLEASE FAMILY PROTEIN"/>
    <property type="match status" value="1"/>
</dbReference>
<dbReference type="PANTHER" id="PTHR42646">
    <property type="entry name" value="FLAP ENDONUCLEASE XNI"/>
    <property type="match status" value="1"/>
</dbReference>
<dbReference type="Pfam" id="PF01367">
    <property type="entry name" value="5_3_exonuc"/>
    <property type="match status" value="1"/>
</dbReference>
<dbReference type="Pfam" id="PF02739">
    <property type="entry name" value="5_3_exonuc_N"/>
    <property type="match status" value="1"/>
</dbReference>
<dbReference type="SMART" id="SM00475">
    <property type="entry name" value="53EXOc"/>
    <property type="match status" value="1"/>
</dbReference>
<dbReference type="SMART" id="SM00279">
    <property type="entry name" value="HhH2"/>
    <property type="match status" value="1"/>
</dbReference>
<dbReference type="SUPFAM" id="SSF47807">
    <property type="entry name" value="5' to 3' exonuclease, C-terminal subdomain"/>
    <property type="match status" value="1"/>
</dbReference>
<dbReference type="SUPFAM" id="SSF88723">
    <property type="entry name" value="PIN domain-like"/>
    <property type="match status" value="1"/>
</dbReference>
<name>XNI_SHESA</name>
<sequence>MNKFLIIDGLNLVRRIYAAIPDENDMDSLTERVSVACTKLLRIHHPTHVTIVWDGDEMSWRKQLYPDYKKGRKPMPEPLAAGLPALQEHLKSVQIQSIYAAAEADDVIATLAMKTAKAQGEAVIVSTDKGFSQLNHPRISQWDHFNQQYLNITELEQKLGVDRSQFLDLLALAGDSGNKIPGIAGIGPKSAAELLRTFRTLAALFSSLPNLGAKQAKKLAEGRDMARLSYKLAQLQIDLPLNINLKDFRVNGPATTPQLD</sequence>
<evidence type="ECO:0000255" key="1">
    <source>
        <dbReference type="HAMAP-Rule" id="MF_01192"/>
    </source>
</evidence>
<keyword id="KW-0238">DNA-binding</keyword>
<keyword id="KW-0255">Endonuclease</keyword>
<keyword id="KW-0378">Hydrolase</keyword>
<keyword id="KW-0460">Magnesium</keyword>
<keyword id="KW-0479">Metal-binding</keyword>
<keyword id="KW-0540">Nuclease</keyword>
<keyword id="KW-0630">Potassium</keyword>